<name>PG068_VACCW</name>
<organismHost>
    <name type="scientific">Bos taurus</name>
    <name type="common">Bovine</name>
    <dbReference type="NCBI Taxonomy" id="9913"/>
</organismHost>
<dbReference type="EMBL" id="M36339">
    <property type="protein sequence ID" value="AAB59826.1"/>
    <property type="molecule type" value="Genomic_DNA"/>
</dbReference>
<dbReference type="EMBL" id="AY243312">
    <property type="protein sequence ID" value="AAO89341.1"/>
    <property type="molecule type" value="Genomic_DNA"/>
</dbReference>
<dbReference type="PIR" id="E35928">
    <property type="entry name" value="E35928"/>
</dbReference>
<dbReference type="RefSeq" id="YP_232944.1">
    <property type="nucleotide sequence ID" value="NC_006998.1"/>
</dbReference>
<dbReference type="DNASU" id="3707595"/>
<dbReference type="GeneID" id="3707595"/>
<dbReference type="KEGG" id="vg:3707595"/>
<dbReference type="Proteomes" id="UP000000344">
    <property type="component" value="Genome"/>
</dbReference>
<dbReference type="GO" id="GO:0030430">
    <property type="term" value="C:host cell cytoplasm"/>
    <property type="evidence" value="ECO:0007669"/>
    <property type="project" value="UniProtKB-SubCell"/>
</dbReference>
<dbReference type="GO" id="GO:0044423">
    <property type="term" value="C:virion component"/>
    <property type="evidence" value="ECO:0007669"/>
    <property type="project" value="UniProtKB-KW"/>
</dbReference>
<dbReference type="GO" id="GO:0019068">
    <property type="term" value="P:virion assembly"/>
    <property type="evidence" value="ECO:0000314"/>
    <property type="project" value="UniProtKB"/>
</dbReference>
<dbReference type="InterPro" id="IPR006749">
    <property type="entry name" value="Pox_E6"/>
</dbReference>
<dbReference type="Pfam" id="PF04656">
    <property type="entry name" value="Pox_E6"/>
    <property type="match status" value="1"/>
</dbReference>
<dbReference type="PIRSF" id="PIRSF015629">
    <property type="entry name" value="VAC_E6R"/>
    <property type="match status" value="1"/>
</dbReference>
<proteinExistence type="evidence at transcript level"/>
<reference key="1">
    <citation type="journal article" date="1990" name="Mol. Cell. Biol.">
        <title>Identification of rpo30, a vaccinia virus RNA polymerase gene with structural similarity to a eucaryotic transcription elongation factor.</title>
        <authorList>
            <person name="Ahn B.-Y."/>
            <person name="Gershon P.D."/>
            <person name="Jones E.V."/>
            <person name="Moss B."/>
        </authorList>
    </citation>
    <scope>NUCLEOTIDE SEQUENCE [GENOMIC DNA]</scope>
</reference>
<reference key="2">
    <citation type="submission" date="2003-02" db="EMBL/GenBank/DDBJ databases">
        <title>Sequencing of the coding region of Vaccinia-WR to an average 9-fold redundancy and an error rate of 0.16/10kb.</title>
        <authorList>
            <person name="Esposito J.J."/>
            <person name="Frace A.M."/>
            <person name="Sammons S.A."/>
            <person name="Olsen-Rasmussen M."/>
            <person name="Osborne J."/>
            <person name="Wohlhueter R."/>
        </authorList>
    </citation>
    <scope>NUCLEOTIDE SEQUENCE [LARGE SCALE GENOMIC DNA]</scope>
</reference>
<reference key="3">
    <citation type="journal article" date="2009" name="Virology">
        <title>Expression of the highly conserved vaccinia virus E6 protein is required for virion morphogenesis.</title>
        <authorList>
            <person name="Resch W."/>
            <person name="Weisberg A.S."/>
            <person name="Moss B."/>
        </authorList>
    </citation>
    <scope>FUNCTION</scope>
</reference>
<reference key="4">
    <citation type="journal article" date="2010" name="Virology">
        <title>The E6 protein from vaccinia virus is required for the formation of immature virions.</title>
        <authorList>
            <person name="Boyd O."/>
            <person name="Turner P.C."/>
            <person name="Moyer R.W."/>
            <person name="Condit R.C."/>
            <person name="Moussatche N."/>
        </authorList>
    </citation>
    <scope>FUNCTION</scope>
    <scope>SUBCELLULAR LOCATION</scope>
</reference>
<reference key="5">
    <citation type="journal article" date="2010" name="Virology">
        <title>Temperature-sensitive mutant in the vaccinia virus E6 protein produce virions that are transcriptionally inactive.</title>
        <authorList>
            <person name="Boyd O."/>
            <person name="Strahl A.L."/>
            <person name="Rodeffer C."/>
            <person name="Condit R.C."/>
            <person name="Moussatche N."/>
        </authorList>
    </citation>
    <scope>FUNCTION</scope>
    <scope>INDUCTION</scope>
    <source>
        <strain>Mutant Cts52</strain>
    </source>
</reference>
<reference key="6">
    <citation type="journal article" date="2015" name="Virology">
        <title>The vaccinia virus E6 protein influences virion protein localization during virus assembly.</title>
        <authorList>
            <person name="Condit R.C."/>
            <person name="Moussatche N."/>
        </authorList>
    </citation>
    <scope>FUNCTION</scope>
</reference>
<reference key="7">
    <citation type="journal article" date="2015" name="J. Virol.">
        <title>Deciphering poxvirus gene expression by RNA sequencing and ribosome profiling.</title>
        <authorList>
            <person name="Yang Z."/>
            <person name="Cao S."/>
            <person name="Martens C.A."/>
            <person name="Porcella S.F."/>
            <person name="Xie Z."/>
            <person name="Ma M."/>
            <person name="Shen B."/>
            <person name="Moss B."/>
        </authorList>
    </citation>
    <scope>INDUCTION</scope>
</reference>
<protein>
    <recommendedName>
        <fullName>Protein OPG068</fullName>
    </recommendedName>
    <alternativeName>
        <fullName>Protein E6</fullName>
    </alternativeName>
</protein>
<evidence type="ECO:0000269" key="1">
    <source>
    </source>
</evidence>
<evidence type="ECO:0000269" key="2">
    <source>
    </source>
</evidence>
<evidence type="ECO:0000269" key="3">
    <source>
    </source>
</evidence>
<evidence type="ECO:0000269" key="4">
    <source>
    </source>
</evidence>
<evidence type="ECO:0000269" key="5">
    <source>
    </source>
</evidence>
<evidence type="ECO:0000305" key="6"/>
<organism>
    <name type="scientific">Vaccinia virus (strain Western Reserve)</name>
    <name type="common">VACV</name>
    <name type="synonym">Vaccinia virus (strain WR)</name>
    <dbReference type="NCBI Taxonomy" id="10254"/>
    <lineage>
        <taxon>Viruses</taxon>
        <taxon>Varidnaviria</taxon>
        <taxon>Bamfordvirae</taxon>
        <taxon>Nucleocytoviricota</taxon>
        <taxon>Pokkesviricetes</taxon>
        <taxon>Chitovirales</taxon>
        <taxon>Poxviridae</taxon>
        <taxon>Chordopoxvirinae</taxon>
        <taxon>Orthopoxvirus</taxon>
        <taxon>Vaccinia virus</taxon>
    </lineage>
</organism>
<feature type="chain" id="PRO_0000099455" description="Protein OPG068">
    <location>
        <begin position="1"/>
        <end position="567"/>
    </location>
</feature>
<feature type="sequence variant" description="In strain: Mutant Cts52.">
    <original>P</original>
    <variation>L</variation>
    <location>
        <position position="226"/>
    </location>
</feature>
<accession>P21607</accession>
<accession>Q76ZV9</accession>
<keyword id="KW-1035">Host cytoplasm</keyword>
<keyword id="KW-1185">Reference proteome</keyword>
<keyword id="KW-0946">Virion</keyword>
<gene>
    <name type="primary">OPG068</name>
    <name type="ordered locus">VACWR062</name>
    <name type="ORF">E6R</name>
</gene>
<comment type="function">
    <text evidence="1 2 3 4">Plays an essential role for maintaining proper localization of the seven-protein complex and the viroplasm during assembly.</text>
</comment>
<comment type="subcellular location">
    <subcellularLocation>
        <location evidence="2">Virion</location>
    </subcellularLocation>
    <subcellularLocation>
        <location evidence="6">Host cytoplasm</location>
    </subcellularLocation>
    <text evidence="2">Localizes in viroplasm and in the mature virion (MV).</text>
</comment>
<comment type="induction">
    <text evidence="5">Expressed in the intermediate phase of the viral replicative cycle.</text>
</comment>
<comment type="similarity">
    <text evidence="6">Belongs to the orthopoxvirus OPG068 family.</text>
</comment>
<sequence>MDFIRRKYLIYTVENNIDFLKDDTLSKVNNFTLNHVLALKYLVSNFPQHVITKDVLANTNFFVFIHMVRCCKVYEAVLRHAFDAPTLYVKALTKNYLSFSNTIQSYKETVHKLTQDEKFLEVAKYMDELGELIGVNYDLVLNPLFHGGEPIKDMEIIFLKLFKKTDFKVVKKLSVIRLLIWAYLSKKDTGIEFADNDRQDIYTLFQQTGRIVHSNLTETFRDYIFPGDKTSYWVWLNESIANDADIVLNRHAITMYDKILSYIYSEIKQGRVNKNMLKLVYIFEPEKDIRELLLEIIYDIPGDILSIIDAKNDDWKKYFISFYKANFINGNTFISDRTFNEDLFRVVVQIDPEYFDNERIMSLFSTSAADIKRFDELDINNSYISNIIYEVNDITLDTMDDMKKCQIFNEDTSYYVKEYNTYLFLHESDPMVIENGILKKLSSIKSKSRRLNLFSKNILKYYLDGQLARLGLVLDDYKGDLLVKMINHLKSVEDVSAFVRFSTDKNPSILPSLIKTILASYNISIIVLFQRFLRDNLYHVEEFLDKSIHLTKTDKKYILQLIRHGRS</sequence>